<gene>
    <name evidence="8 13" type="primary">Alkbh5</name>
    <name type="synonym">Abh5</name>
    <name type="synonym">Ofoxd</name>
</gene>
<proteinExistence type="evidence at protein level"/>
<protein>
    <recommendedName>
        <fullName evidence="9">RNA demethylase ALKBH5</fullName>
        <ecNumber evidence="10 11 12">1.14.11.53</ecNumber>
    </recommendedName>
    <alternativeName>
        <fullName>Alkylated DNA repair protein alkB homolog 5</fullName>
    </alternativeName>
    <alternativeName>
        <fullName>Alpha-ketoglutarate-dependent dioxygenase alkB homolog 5</fullName>
    </alternativeName>
</protein>
<organism>
    <name type="scientific">Mus musculus</name>
    <name type="common">Mouse</name>
    <dbReference type="NCBI Taxonomy" id="10090"/>
    <lineage>
        <taxon>Eukaryota</taxon>
        <taxon>Metazoa</taxon>
        <taxon>Chordata</taxon>
        <taxon>Craniata</taxon>
        <taxon>Vertebrata</taxon>
        <taxon>Euteleostomi</taxon>
        <taxon>Mammalia</taxon>
        <taxon>Eutheria</taxon>
        <taxon>Euarchontoglires</taxon>
        <taxon>Glires</taxon>
        <taxon>Rodentia</taxon>
        <taxon>Myomorpha</taxon>
        <taxon>Muroidea</taxon>
        <taxon>Muridae</taxon>
        <taxon>Murinae</taxon>
        <taxon>Mus</taxon>
        <taxon>Mus</taxon>
    </lineage>
</organism>
<reference key="1">
    <citation type="journal article" date="2005" name="Science">
        <title>The transcriptional landscape of the mammalian genome.</title>
        <authorList>
            <person name="Carninci P."/>
            <person name="Kasukawa T."/>
            <person name="Katayama S."/>
            <person name="Gough J."/>
            <person name="Frith M.C."/>
            <person name="Maeda N."/>
            <person name="Oyama R."/>
            <person name="Ravasi T."/>
            <person name="Lenhard B."/>
            <person name="Wells C."/>
            <person name="Kodzius R."/>
            <person name="Shimokawa K."/>
            <person name="Bajic V.B."/>
            <person name="Brenner S.E."/>
            <person name="Batalov S."/>
            <person name="Forrest A.R."/>
            <person name="Zavolan M."/>
            <person name="Davis M.J."/>
            <person name="Wilming L.G."/>
            <person name="Aidinis V."/>
            <person name="Allen J.E."/>
            <person name="Ambesi-Impiombato A."/>
            <person name="Apweiler R."/>
            <person name="Aturaliya R.N."/>
            <person name="Bailey T.L."/>
            <person name="Bansal M."/>
            <person name="Baxter L."/>
            <person name="Beisel K.W."/>
            <person name="Bersano T."/>
            <person name="Bono H."/>
            <person name="Chalk A.M."/>
            <person name="Chiu K.P."/>
            <person name="Choudhary V."/>
            <person name="Christoffels A."/>
            <person name="Clutterbuck D.R."/>
            <person name="Crowe M.L."/>
            <person name="Dalla E."/>
            <person name="Dalrymple B.P."/>
            <person name="de Bono B."/>
            <person name="Della Gatta G."/>
            <person name="di Bernardo D."/>
            <person name="Down T."/>
            <person name="Engstrom P."/>
            <person name="Fagiolini M."/>
            <person name="Faulkner G."/>
            <person name="Fletcher C.F."/>
            <person name="Fukushima T."/>
            <person name="Furuno M."/>
            <person name="Futaki S."/>
            <person name="Gariboldi M."/>
            <person name="Georgii-Hemming P."/>
            <person name="Gingeras T.R."/>
            <person name="Gojobori T."/>
            <person name="Green R.E."/>
            <person name="Gustincich S."/>
            <person name="Harbers M."/>
            <person name="Hayashi Y."/>
            <person name="Hensch T.K."/>
            <person name="Hirokawa N."/>
            <person name="Hill D."/>
            <person name="Huminiecki L."/>
            <person name="Iacono M."/>
            <person name="Ikeo K."/>
            <person name="Iwama A."/>
            <person name="Ishikawa T."/>
            <person name="Jakt M."/>
            <person name="Kanapin A."/>
            <person name="Katoh M."/>
            <person name="Kawasawa Y."/>
            <person name="Kelso J."/>
            <person name="Kitamura H."/>
            <person name="Kitano H."/>
            <person name="Kollias G."/>
            <person name="Krishnan S.P."/>
            <person name="Kruger A."/>
            <person name="Kummerfeld S.K."/>
            <person name="Kurochkin I.V."/>
            <person name="Lareau L.F."/>
            <person name="Lazarevic D."/>
            <person name="Lipovich L."/>
            <person name="Liu J."/>
            <person name="Liuni S."/>
            <person name="McWilliam S."/>
            <person name="Madan Babu M."/>
            <person name="Madera M."/>
            <person name="Marchionni L."/>
            <person name="Matsuda H."/>
            <person name="Matsuzawa S."/>
            <person name="Miki H."/>
            <person name="Mignone F."/>
            <person name="Miyake S."/>
            <person name="Morris K."/>
            <person name="Mottagui-Tabar S."/>
            <person name="Mulder N."/>
            <person name="Nakano N."/>
            <person name="Nakauchi H."/>
            <person name="Ng P."/>
            <person name="Nilsson R."/>
            <person name="Nishiguchi S."/>
            <person name="Nishikawa S."/>
            <person name="Nori F."/>
            <person name="Ohara O."/>
            <person name="Okazaki Y."/>
            <person name="Orlando V."/>
            <person name="Pang K.C."/>
            <person name="Pavan W.J."/>
            <person name="Pavesi G."/>
            <person name="Pesole G."/>
            <person name="Petrovsky N."/>
            <person name="Piazza S."/>
            <person name="Reed J."/>
            <person name="Reid J.F."/>
            <person name="Ring B.Z."/>
            <person name="Ringwald M."/>
            <person name="Rost B."/>
            <person name="Ruan Y."/>
            <person name="Salzberg S.L."/>
            <person name="Sandelin A."/>
            <person name="Schneider C."/>
            <person name="Schoenbach C."/>
            <person name="Sekiguchi K."/>
            <person name="Semple C.A."/>
            <person name="Seno S."/>
            <person name="Sessa L."/>
            <person name="Sheng Y."/>
            <person name="Shibata Y."/>
            <person name="Shimada H."/>
            <person name="Shimada K."/>
            <person name="Silva D."/>
            <person name="Sinclair B."/>
            <person name="Sperling S."/>
            <person name="Stupka E."/>
            <person name="Sugiura K."/>
            <person name="Sultana R."/>
            <person name="Takenaka Y."/>
            <person name="Taki K."/>
            <person name="Tammoja K."/>
            <person name="Tan S.L."/>
            <person name="Tang S."/>
            <person name="Taylor M.S."/>
            <person name="Tegner J."/>
            <person name="Teichmann S.A."/>
            <person name="Ueda H.R."/>
            <person name="van Nimwegen E."/>
            <person name="Verardo R."/>
            <person name="Wei C.L."/>
            <person name="Yagi K."/>
            <person name="Yamanishi H."/>
            <person name="Zabarovsky E."/>
            <person name="Zhu S."/>
            <person name="Zimmer A."/>
            <person name="Hide W."/>
            <person name="Bult C."/>
            <person name="Grimmond S.M."/>
            <person name="Teasdale R.D."/>
            <person name="Liu E.T."/>
            <person name="Brusic V."/>
            <person name="Quackenbush J."/>
            <person name="Wahlestedt C."/>
            <person name="Mattick J.S."/>
            <person name="Hume D.A."/>
            <person name="Kai C."/>
            <person name="Sasaki D."/>
            <person name="Tomaru Y."/>
            <person name="Fukuda S."/>
            <person name="Kanamori-Katayama M."/>
            <person name="Suzuki M."/>
            <person name="Aoki J."/>
            <person name="Arakawa T."/>
            <person name="Iida J."/>
            <person name="Imamura K."/>
            <person name="Itoh M."/>
            <person name="Kato T."/>
            <person name="Kawaji H."/>
            <person name="Kawagashira N."/>
            <person name="Kawashima T."/>
            <person name="Kojima M."/>
            <person name="Kondo S."/>
            <person name="Konno H."/>
            <person name="Nakano K."/>
            <person name="Ninomiya N."/>
            <person name="Nishio T."/>
            <person name="Okada M."/>
            <person name="Plessy C."/>
            <person name="Shibata K."/>
            <person name="Shiraki T."/>
            <person name="Suzuki S."/>
            <person name="Tagami M."/>
            <person name="Waki K."/>
            <person name="Watahiki A."/>
            <person name="Okamura-Oho Y."/>
            <person name="Suzuki H."/>
            <person name="Kawai J."/>
            <person name="Hayashizaki Y."/>
        </authorList>
    </citation>
    <scope>NUCLEOTIDE SEQUENCE [LARGE SCALE MRNA]</scope>
    <source>
        <strain>C57BL/6J</strain>
        <tissue>Egg</tissue>
        <tissue>Eye</tissue>
    </source>
</reference>
<reference key="2">
    <citation type="journal article" date="2009" name="PLoS Biol.">
        <title>Lineage-specific biology revealed by a finished genome assembly of the mouse.</title>
        <authorList>
            <person name="Church D.M."/>
            <person name="Goodstadt L."/>
            <person name="Hillier L.W."/>
            <person name="Zody M.C."/>
            <person name="Goldstein S."/>
            <person name="She X."/>
            <person name="Bult C.J."/>
            <person name="Agarwala R."/>
            <person name="Cherry J.L."/>
            <person name="DiCuccio M."/>
            <person name="Hlavina W."/>
            <person name="Kapustin Y."/>
            <person name="Meric P."/>
            <person name="Maglott D."/>
            <person name="Birtle Z."/>
            <person name="Marques A.C."/>
            <person name="Graves T."/>
            <person name="Zhou S."/>
            <person name="Teague B."/>
            <person name="Potamousis K."/>
            <person name="Churas C."/>
            <person name="Place M."/>
            <person name="Herschleb J."/>
            <person name="Runnheim R."/>
            <person name="Forrest D."/>
            <person name="Amos-Landgraf J."/>
            <person name="Schwartz D.C."/>
            <person name="Cheng Z."/>
            <person name="Lindblad-Toh K."/>
            <person name="Eichler E.E."/>
            <person name="Ponting C.P."/>
        </authorList>
    </citation>
    <scope>NUCLEOTIDE SEQUENCE [LARGE SCALE GENOMIC DNA]</scope>
    <source>
        <strain>C57BL/6J</strain>
    </source>
</reference>
<reference key="3">
    <citation type="journal article" date="2004" name="Genome Res.">
        <title>The status, quality, and expansion of the NIH full-length cDNA project: the Mammalian Gene Collection (MGC).</title>
        <authorList>
            <consortium name="The MGC Project Team"/>
        </authorList>
    </citation>
    <scope>NUCLEOTIDE SEQUENCE [LARGE SCALE MRNA]</scope>
    <source>
        <strain>C57BL/6J</strain>
        <tissue>Brain</tissue>
    </source>
</reference>
<reference key="4">
    <citation type="journal article" date="2007" name="Proc. Natl. Acad. Sci. U.S.A.">
        <title>Large-scale phosphorylation analysis of mouse liver.</title>
        <authorList>
            <person name="Villen J."/>
            <person name="Beausoleil S.A."/>
            <person name="Gerber S.A."/>
            <person name="Gygi S.P."/>
        </authorList>
    </citation>
    <scope>PHOSPHORYLATION [LARGE SCALE ANALYSIS] AT SER-362; SER-372 AND SER-385</scope>
    <scope>IDENTIFICATION BY MASS SPECTROMETRY [LARGE SCALE ANALYSIS]</scope>
    <source>
        <tissue>Liver</tissue>
    </source>
</reference>
<reference key="5">
    <citation type="journal article" date="2010" name="Cell">
        <title>A tissue-specific atlas of mouse protein phosphorylation and expression.</title>
        <authorList>
            <person name="Huttlin E.L."/>
            <person name="Jedrychowski M.P."/>
            <person name="Elias J.E."/>
            <person name="Goswami T."/>
            <person name="Rad R."/>
            <person name="Beausoleil S.A."/>
            <person name="Villen J."/>
            <person name="Haas W."/>
            <person name="Sowa M.E."/>
            <person name="Gygi S.P."/>
        </authorList>
    </citation>
    <scope>PHOSPHORYLATION [LARGE SCALE ANALYSIS] AT SER-65; SER-362 AND SER-385</scope>
    <scope>IDENTIFICATION BY MASS SPECTROMETRY [LARGE SCALE ANALYSIS]</scope>
    <source>
        <tissue>Kidney</tissue>
        <tissue>Liver</tissue>
        <tissue>Lung</tissue>
        <tissue>Pancreas</tissue>
        <tissue>Spleen</tissue>
        <tissue>Testis</tissue>
    </source>
</reference>
<reference key="6">
    <citation type="journal article" date="2013" name="Mol. Cell">
        <title>ALKBH5 is a mammalian RNA demethylase that impacts RNA metabolism and mouse fertility.</title>
        <authorList>
            <person name="Zheng G."/>
            <person name="Dahl J.A."/>
            <person name="Niu Y."/>
            <person name="Fedorcsak P."/>
            <person name="Huang C.M."/>
            <person name="Li C.J."/>
            <person name="Vagbo C.B."/>
            <person name="Shi Y."/>
            <person name="Wang W.L."/>
            <person name="Song S.H."/>
            <person name="Lu Z."/>
            <person name="Bosmans R.P."/>
            <person name="Dai Q."/>
            <person name="Hao Y.J."/>
            <person name="Yang X."/>
            <person name="Zhao W.M."/>
            <person name="Tong W.M."/>
            <person name="Wang X.J."/>
            <person name="Bogdan F."/>
            <person name="Furu K."/>
            <person name="Fu Y."/>
            <person name="Jia G."/>
            <person name="Zhao X."/>
            <person name="Liu J."/>
            <person name="Krokan H.E."/>
            <person name="Klungland A."/>
            <person name="Yang Y.G."/>
            <person name="He C."/>
        </authorList>
    </citation>
    <scope>FUNCTION</scope>
    <scope>TISSUE SPECIFICITY</scope>
    <scope>DISRUPTION PHENOTYPE</scope>
</reference>
<reference key="7">
    <citation type="journal article" date="2018" name="Proc. Natl. Acad. Sci. U.S.A.">
        <title>ALKBH5-dependent m6A demethylation controls splicing and stability of long 3'-UTR mRNAs in male germ cells.</title>
        <authorList>
            <person name="Tang C."/>
            <person name="Klukovich R."/>
            <person name="Peng H."/>
            <person name="Wang Z."/>
            <person name="Yu T."/>
            <person name="Zhang Y."/>
            <person name="Zheng H."/>
            <person name="Klungland A."/>
            <person name="Yan W."/>
        </authorList>
    </citation>
    <scope>FUNCTION</scope>
    <scope>SUBCELLULAR LOCATION</scope>
    <scope>DISRUPTION PHENOTYPE</scope>
    <scope>TISSUE SPECIFICITY</scope>
</reference>
<reference key="8">
    <citation type="journal article" date="2022" name="Proc. Natl. Acad. Sci. U.S.A.">
        <title>RNA m6A demethylase ALKBH5 regulates the development of gammadelta T cells.</title>
        <authorList>
            <person name="Ding C."/>
            <person name="Xu H."/>
            <person name="Yu Z."/>
            <person name="Roulis M."/>
            <person name="Qu R."/>
            <person name="Zhou J."/>
            <person name="Oh J."/>
            <person name="Crawford J."/>
            <person name="Gao Y."/>
            <person name="Jackson R."/>
            <person name="Sefik E."/>
            <person name="Li S."/>
            <person name="Wei Z."/>
            <person name="Skadow M."/>
            <person name="Yin Z."/>
            <person name="Ouyang X."/>
            <person name="Wang L."/>
            <person name="Zou Q."/>
            <person name="Su B."/>
            <person name="Hu W."/>
            <person name="Flavell R.A."/>
            <person name="Li H.B."/>
        </authorList>
    </citation>
    <scope>FUNCTION</scope>
    <scope>CATALYTIC ACTIVITY</scope>
    <scope>DISRUPTION PHENOTYPE</scope>
</reference>
<reference key="9">
    <citation type="journal article" date="2023" name="Nat. Commun.">
        <title>Inhibition of ALKBH5 attenuates I/R-induced renal injury in male mice by promoting Ccl28 m6A modification and increasing Treg recruitment.</title>
        <authorList>
            <person name="Chen J."/>
            <person name="Xu C."/>
            <person name="Yang K."/>
            <person name="Gao R."/>
            <person name="Cao Y."/>
            <person name="Liang L."/>
            <person name="Chen S."/>
            <person name="Xu S."/>
            <person name="Rong R."/>
            <person name="Wang J."/>
            <person name="Zhu T."/>
        </authorList>
    </citation>
    <scope>FUNCTION</scope>
    <scope>CATALYTIC ACTIVITY</scope>
    <scope>ACTIVITY REGULATION</scope>
    <scope>DISRUPTION PHENOTYPE</scope>
</reference>
<accession>Q3TSG4</accession>
<accession>Q80US0</accession>
<accession>Q8BKB9</accession>
<accession>Q8BKC1</accession>
<name>ALKB5_MOUSE</name>
<sequence length="395" mass="44411">MAAASGYTDLREKLKSMTSRDNYKAGSREAAAAAAAAVAAAAAAAAAAEPYPASGTTKRKYQEDSDPERSDYEEHQLQKEEEARKVKSGIRQIRLFSQDECSKIEARIDEVVSRAEKGLYNEHTVDRAPLRNKYFFGEGYTYGAQLQKRGPGQERLYPPGDVDEIPDWVHQLVIQKLVEHRVIPEGFVNSAVINDYQPGGCIVSHVDPIHIFERPIVSVSFFSDSALCFGCKFQFKPIRVSEPVLSLPVRRGSVTVLSGYAADEITHCIRPQDIKERRAVIILRKTRLDAPRLETKSLSSSTLPPSYASDRLSGNTRDPALKPKRSHRKADPDAAHRPRILEMDKEENRRSVLLPTHRRRGSFSSENYWRKSYESSEDCPEAASSPTRKVKMRRH</sequence>
<evidence type="ECO:0000250" key="1">
    <source>
        <dbReference type="UniProtKB" id="Q6P6C2"/>
    </source>
</evidence>
<evidence type="ECO:0000255" key="2"/>
<evidence type="ECO:0000256" key="3">
    <source>
        <dbReference type="SAM" id="MobiDB-lite"/>
    </source>
</evidence>
<evidence type="ECO:0000269" key="4">
    <source>
    </source>
</evidence>
<evidence type="ECO:0000269" key="5">
    <source>
    </source>
</evidence>
<evidence type="ECO:0000269" key="6">
    <source>
    </source>
</evidence>
<evidence type="ECO:0000269" key="7">
    <source>
    </source>
</evidence>
<evidence type="ECO:0000303" key="8">
    <source>
    </source>
</evidence>
<evidence type="ECO:0000305" key="9"/>
<evidence type="ECO:0000305" key="10">
    <source>
    </source>
</evidence>
<evidence type="ECO:0000305" key="11">
    <source>
    </source>
</evidence>
<evidence type="ECO:0000305" key="12">
    <source>
    </source>
</evidence>
<evidence type="ECO:0000312" key="13">
    <source>
        <dbReference type="MGI" id="MGI:2144489"/>
    </source>
</evidence>
<evidence type="ECO:0007744" key="14">
    <source>
    </source>
</evidence>
<evidence type="ECO:0007744" key="15">
    <source>
    </source>
</evidence>
<keyword id="KW-0007">Acetylation</keyword>
<keyword id="KW-0175">Coiled coil</keyword>
<keyword id="KW-0221">Differentiation</keyword>
<keyword id="KW-0223">Dioxygenase</keyword>
<keyword id="KW-1015">Disulfide bond</keyword>
<keyword id="KW-0408">Iron</keyword>
<keyword id="KW-1017">Isopeptide bond</keyword>
<keyword id="KW-0479">Metal-binding</keyword>
<keyword id="KW-0488">Methylation</keyword>
<keyword id="KW-0539">Nucleus</keyword>
<keyword id="KW-0560">Oxidoreductase</keyword>
<keyword id="KW-0597">Phosphoprotein</keyword>
<keyword id="KW-1185">Reference proteome</keyword>
<keyword id="KW-0744">Spermatogenesis</keyword>
<keyword id="KW-0832">Ubl conjugation</keyword>
<comment type="function">
    <text evidence="1 4 5 6 7">Dioxygenase that specifically demethylates N(6)-methyladenosine (m6A) RNA, the most prevalent internal modification of messenger RNA (mRNA) in higher eukaryotes (PubMed:29279410, PubMed:35939687, PubMed:36859428). Demethylates RNA by oxidative demethylation, which requires molecular oxygen, alpha-ketoglutarate and iron (By similarity). Demethylation of m6A mRNA affects mRNA processing, translation and export (PubMed:35939687, PubMed:36859428). Can also demethylate N(6)-methyladenosine in single-stranded DNA (in vitro) (By similarity). Required for the late meiotic and haploid phases of spermatogenesis by mediating m6A demethylation in spermatocytes and round spermatids: m6A demethylation of target transcripts is required for correct splicing and the production of longer 3'-UTR mRNAs in male germ cells (PubMed:23177736, PubMed:29279410). Involved in paraspeckle assembly, a nuclear membraneless organelle, by undergoing liquid-liquid phase separation (By similarity). Paraspeckle assembly is coupled with m6A demethylation of RNAs, such as NEAT1 non-coding RNA (By similarity). Also acts as a negative regulator of T-cell development: inhibits gamma-delta T-cell proliferation via demethylation of JAG1 and NOTCH2 transcripts (PubMed:35939687). Inhibits regulatory T-cell (Treg) recruitment by mediating demethylation and destabilization of CCL28 mRNAs (PubMed:36859428).</text>
</comment>
<comment type="catalytic activity">
    <reaction evidence="10 11 12">
        <text>an N(6)-methyladenosine in mRNA + 2-oxoglutarate + O2 = an adenosine in mRNA + formaldehyde + succinate + CO2</text>
        <dbReference type="Rhea" id="RHEA:49520"/>
        <dbReference type="Rhea" id="RHEA-COMP:12414"/>
        <dbReference type="Rhea" id="RHEA-COMP:12417"/>
        <dbReference type="ChEBI" id="CHEBI:15379"/>
        <dbReference type="ChEBI" id="CHEBI:16526"/>
        <dbReference type="ChEBI" id="CHEBI:16810"/>
        <dbReference type="ChEBI" id="CHEBI:16842"/>
        <dbReference type="ChEBI" id="CHEBI:30031"/>
        <dbReference type="ChEBI" id="CHEBI:74411"/>
        <dbReference type="ChEBI" id="CHEBI:74449"/>
        <dbReference type="EC" id="1.14.11.53"/>
    </reaction>
    <physiologicalReaction direction="left-to-right" evidence="10 11 12">
        <dbReference type="Rhea" id="RHEA:49521"/>
    </physiologicalReaction>
</comment>
<comment type="cofactor">
    <cofactor evidence="1">
        <name>Fe(2+)</name>
        <dbReference type="ChEBI" id="CHEBI:29033"/>
    </cofactor>
    <text evidence="1">Binds 1 Fe(2+) ion per subunit.</text>
</comment>
<comment type="activity regulation">
    <text evidence="1 7">RNA demethylase activity is inhibited following sumoylation (By similarity). Inhibition is relieved following desumoylation (By similarity). Inhibited by histone demethylase inhibitor IOX1 (PubMed:36859428).</text>
</comment>
<comment type="subunit">
    <text evidence="1">Monomer (By similarity). Interacts with RBM33; promoting desumoylation by SENP1 and recruitment to N(6)-methyladenosine-containing mRNAs (By similarity). Interacts (when acetylated by KAT8) with PSPC1; interaction facilitates recognition of N(6)-methyladenosine (m6A) mRNA (By similarity).</text>
</comment>
<comment type="subcellular location">
    <subcellularLocation>
        <location evidence="5">Nucleus speckle</location>
    </subcellularLocation>
    <text evidence="1">Promotes formation and localizes to paraspeckles, a nuclear membraneless organelle.</text>
</comment>
<comment type="tissue specificity">
    <text evidence="4 5">Widely expressed, with highest expression in testis (PubMed:23177736). In testis, present in almost all testicular cell types except elongating and elongated spermatids (at protein level) (PubMed:29279410). Among spermatogenic cells, present at high level in spermatocytes; medium levels in spermatogonia and lower levels in round spermatids (at protein level) (PubMed:29279410).</text>
</comment>
<comment type="domain">
    <text evidence="1">The C-terminal disordered region undergoes liquid-liquid phase separation (LLPS) for the formation of paraspeckle membraneless compartment.</text>
</comment>
<comment type="PTM">
    <text evidence="1">Phosphorylated at Ser-88 and Ser-326 in response to reactive oxygen species (ROS), promoting sumoylation and inactivation.</text>
</comment>
<comment type="PTM">
    <text evidence="1">Acetylated by KAT8 at Lys-236, promoting interaction with PSPC1, thereby facilitating recognition of N(6)-methyladenosine (m6A) mRNA by ALKBH5. Deacetylated at Lys-236 by HDAC7.</text>
</comment>
<comment type="PTM">
    <text evidence="1">Sumoylated at Lys-87 and Lys-322 by PIAS4 following phosphorylation at Ser-88 and Ser-326 in response to reactive oxygen species (ROS), inhibiting the RNA demethylase activity. Desumoylated by SENP1; relieving RNA demethylase inhibition, leading to N(6)-methyladenosine-containing mRNAs demethylation.</text>
</comment>
<comment type="PTM">
    <text evidence="1">Ubiquitinated at Lys-58 via 'Lys-48'-linked polyubiquitin chain, leading to its degradation by the proteasome. Deubiquitinated at Lys-58 by USP9X, promoting its stabilizazion.</text>
</comment>
<comment type="disruption phenotype">
    <text evidence="4 5 6 7">Mice are viable, anatomically normal and reach adulthood but display impaired fertility resulting from apoptosis that affects meiotic metaphase-stage spermatocytes (PubMed:23177736, PubMed:29279410). Testes are significantly smaller and histological analysis of testis sections reveal aberrant tubular architecture and size (PubMed:23177736, PubMed:29279410). The number of spermatozoa released from cauda epididymes is dramatically reduced, and the spermatozoa are morphologically abnormal with greatly compromised motility (PubMed:23177736). Male mice display increased m6A in mRNAs in spermatocytes, leading to aberrant splicing and production of shorter transcripts that are rapidly degraded (PubMed:29279410). Expansion of gamma-delta T-cells in lymphocytes, conferring enhanced protection against gastrointestinal S.typhimurium infection (PubMed:35939687). Mice display milder pathological damage and better renal function in a model of ischemia reperfusion injury due to increased Ccl28 mRNA stability (PubMed:36859428).</text>
</comment>
<comment type="similarity">
    <text evidence="9">Belongs to the alkB family.</text>
</comment>
<feature type="initiator methionine" description="Removed" evidence="1">
    <location>
        <position position="1"/>
    </location>
</feature>
<feature type="chain" id="PRO_0000239284" description="RNA demethylase ALKBH5">
    <location>
        <begin position="2"/>
        <end position="395"/>
    </location>
</feature>
<feature type="region of interest" description="Disordered" evidence="3">
    <location>
        <begin position="1"/>
        <end position="28"/>
    </location>
</feature>
<feature type="region of interest" description="Disordered" evidence="3">
    <location>
        <begin position="47"/>
        <end position="83"/>
    </location>
</feature>
<feature type="region of interest" description="Disordered" evidence="3">
    <location>
        <begin position="294"/>
        <end position="395"/>
    </location>
</feature>
<feature type="coiled-coil region" evidence="2">
    <location>
        <begin position="68"/>
        <end position="117"/>
    </location>
</feature>
<feature type="compositionally biased region" description="Basic and acidic residues" evidence="3">
    <location>
        <begin position="60"/>
        <end position="83"/>
    </location>
</feature>
<feature type="compositionally biased region" description="Low complexity" evidence="3">
    <location>
        <begin position="296"/>
        <end position="306"/>
    </location>
</feature>
<feature type="compositionally biased region" description="Basic and acidic residues" evidence="3">
    <location>
        <begin position="329"/>
        <end position="350"/>
    </location>
</feature>
<feature type="active site" evidence="1">
    <location>
        <position position="140"/>
    </location>
</feature>
<feature type="binding site" evidence="1">
    <location>
        <position position="194"/>
    </location>
    <ligand>
        <name>2-oxoglutarate</name>
        <dbReference type="ChEBI" id="CHEBI:16810"/>
    </ligand>
</feature>
<feature type="binding site" evidence="1">
    <location>
        <position position="196"/>
    </location>
    <ligand>
        <name>2-oxoglutarate</name>
        <dbReference type="ChEBI" id="CHEBI:16810"/>
    </ligand>
</feature>
<feature type="binding site" evidence="1">
    <location>
        <position position="205"/>
    </location>
    <ligand>
        <name>2-oxoglutarate</name>
        <dbReference type="ChEBI" id="CHEBI:16810"/>
    </ligand>
</feature>
<feature type="binding site" evidence="1">
    <location>
        <position position="267"/>
    </location>
    <ligand>
        <name>2-oxoglutarate</name>
        <dbReference type="ChEBI" id="CHEBI:16810"/>
    </ligand>
</feature>
<feature type="binding site" evidence="1">
    <location>
        <position position="278"/>
    </location>
    <ligand>
        <name>2-oxoglutarate</name>
        <dbReference type="ChEBI" id="CHEBI:16810"/>
    </ligand>
</feature>
<feature type="modified residue" description="N-acetylalanine" evidence="1">
    <location>
        <position position="2"/>
    </location>
</feature>
<feature type="modified residue" description="Phosphoserine" evidence="15">
    <location>
        <position position="65"/>
    </location>
</feature>
<feature type="modified residue" description="Phosphoserine" evidence="1">
    <location>
        <position position="70"/>
    </location>
</feature>
<feature type="modified residue" description="Phosphotyrosine" evidence="1">
    <location>
        <position position="72"/>
    </location>
</feature>
<feature type="modified residue" description="Phosphoserine" evidence="1">
    <location>
        <position position="88"/>
    </location>
</feature>
<feature type="modified residue" description="N6-acetyllysine" evidence="1">
    <location>
        <position position="133"/>
    </location>
</feature>
<feature type="modified residue" description="N6-acetyllysine" evidence="1">
    <location>
        <position position="236"/>
    </location>
</feature>
<feature type="modified residue" description="Phosphoserine" evidence="1">
    <location>
        <position position="326"/>
    </location>
</feature>
<feature type="modified residue" description="Omega-N-methylarginine" evidence="1">
    <location>
        <position position="360"/>
    </location>
</feature>
<feature type="modified residue" description="Phosphoserine" evidence="14 15">
    <location>
        <position position="362"/>
    </location>
</feature>
<feature type="modified residue" description="Phosphoserine" evidence="14">
    <location>
        <position position="372"/>
    </location>
</feature>
<feature type="modified residue" description="Phosphoserine" evidence="1">
    <location>
        <position position="375"/>
    </location>
</feature>
<feature type="modified residue" description="Phosphoserine" evidence="14 15">
    <location>
        <position position="385"/>
    </location>
</feature>
<feature type="disulfide bond" evidence="1">
    <location>
        <begin position="231"/>
        <end position="268"/>
    </location>
</feature>
<feature type="cross-link" description="Glycyl lysine isopeptide (Lys-Gly) (interchain with G-Cter in ubiquitin)" evidence="1">
    <location>
        <position position="58"/>
    </location>
</feature>
<feature type="cross-link" description="Glycyl lysine isopeptide (Lys-Gly) (interchain with G-Cter in SUMO1)" evidence="1">
    <location>
        <position position="87"/>
    </location>
</feature>
<feature type="cross-link" description="Glycyl lysine isopeptide (Lys-Gly) (interchain with G-Cter in SUMO1)" evidence="1">
    <location>
        <position position="322"/>
    </location>
</feature>
<feature type="cross-link" description="Glycyl lysine isopeptide (Lys-Gly) (interchain with G-Cter in SUMO2)" evidence="1">
    <location>
        <position position="329"/>
    </location>
</feature>
<feature type="sequence conflict" description="In Ref. 1; BAC35481." evidence="9" ref="1">
    <original>P</original>
    <variation>S</variation>
    <location>
        <position position="67"/>
    </location>
</feature>
<feature type="sequence conflict" description="In Ref. 1; BAC35481." evidence="9" ref="1">
    <original>K</original>
    <variation>Q</variation>
    <location>
        <position position="85"/>
    </location>
</feature>
<feature type="sequence conflict" description="In Ref. 3; AAH52076." evidence="9" ref="3">
    <original>E</original>
    <variation>K</variation>
    <location>
        <position position="185"/>
    </location>
</feature>
<feature type="sequence conflict" description="In Ref. 1; BAC35481." evidence="9" ref="1">
    <original>V</original>
    <variation>L</variation>
    <location>
        <position position="203"/>
    </location>
</feature>
<feature type="sequence conflict" description="In Ref. 1; BAE36711." evidence="9" ref="1">
    <original>CK</original>
    <variation>WQ</variation>
    <location>
        <begin position="231"/>
        <end position="232"/>
    </location>
</feature>
<dbReference type="EC" id="1.14.11.53" evidence="10 11 12"/>
<dbReference type="EMBL" id="AK053695">
    <property type="protein sequence ID" value="BAC35478.1"/>
    <property type="molecule type" value="mRNA"/>
</dbReference>
<dbReference type="EMBL" id="AK053700">
    <property type="protein sequence ID" value="BAC35481.1"/>
    <property type="molecule type" value="mRNA"/>
</dbReference>
<dbReference type="EMBL" id="AK162072">
    <property type="protein sequence ID" value="BAE36711.1"/>
    <property type="molecule type" value="mRNA"/>
</dbReference>
<dbReference type="EMBL" id="AK163294">
    <property type="protein sequence ID" value="BAE37281.1"/>
    <property type="molecule type" value="mRNA"/>
</dbReference>
<dbReference type="EMBL" id="AL596386">
    <property type="status" value="NOT_ANNOTATED_CDS"/>
    <property type="molecule type" value="Genomic_DNA"/>
</dbReference>
<dbReference type="EMBL" id="BC052076">
    <property type="protein sequence ID" value="AAH52076.1"/>
    <property type="molecule type" value="mRNA"/>
</dbReference>
<dbReference type="CCDS" id="CCDS24794.1"/>
<dbReference type="RefSeq" id="NP_766531.2">
    <property type="nucleotide sequence ID" value="NM_172943.4"/>
</dbReference>
<dbReference type="SMR" id="Q3TSG4"/>
<dbReference type="BioGRID" id="234497">
    <property type="interactions" value="1"/>
</dbReference>
<dbReference type="FunCoup" id="Q3TSG4">
    <property type="interactions" value="3413"/>
</dbReference>
<dbReference type="IntAct" id="Q3TSG4">
    <property type="interactions" value="1"/>
</dbReference>
<dbReference type="MINT" id="Q3TSG4"/>
<dbReference type="STRING" id="10090.ENSMUSP00000049116"/>
<dbReference type="iPTMnet" id="Q3TSG4"/>
<dbReference type="PhosphoSitePlus" id="Q3TSG4"/>
<dbReference type="SwissPalm" id="Q3TSG4"/>
<dbReference type="jPOST" id="Q3TSG4"/>
<dbReference type="PaxDb" id="10090-ENSMUSP00000049116"/>
<dbReference type="PeptideAtlas" id="Q3TSG4"/>
<dbReference type="ProteomicsDB" id="296397"/>
<dbReference type="Pumba" id="Q3TSG4"/>
<dbReference type="Antibodypedia" id="2003">
    <property type="antibodies" value="147 antibodies from 25 providers"/>
</dbReference>
<dbReference type="DNASU" id="268420"/>
<dbReference type="Ensembl" id="ENSMUST00000044250.4">
    <property type="protein sequence ID" value="ENSMUSP00000049116.4"/>
    <property type="gene ID" value="ENSMUSG00000042650.4"/>
</dbReference>
<dbReference type="GeneID" id="268420"/>
<dbReference type="KEGG" id="mmu:268420"/>
<dbReference type="UCSC" id="uc007jgd.2">
    <property type="organism name" value="mouse"/>
</dbReference>
<dbReference type="AGR" id="MGI:2144489"/>
<dbReference type="CTD" id="54890"/>
<dbReference type="MGI" id="MGI:2144489">
    <property type="gene designation" value="Alkbh5"/>
</dbReference>
<dbReference type="VEuPathDB" id="HostDB:ENSMUSG00000042650"/>
<dbReference type="eggNOG" id="KOG4176">
    <property type="taxonomic scope" value="Eukaryota"/>
</dbReference>
<dbReference type="GeneTree" id="ENSGT00390000009298"/>
<dbReference type="HOGENOM" id="CLU_047472_1_0_1"/>
<dbReference type="InParanoid" id="Q3TSG4"/>
<dbReference type="OMA" id="GWVHELV"/>
<dbReference type="OrthoDB" id="271595at2759"/>
<dbReference type="PhylomeDB" id="Q3TSG4"/>
<dbReference type="TreeFam" id="TF329212"/>
<dbReference type="BRENDA" id="1.14.11.53">
    <property type="organism ID" value="3474"/>
</dbReference>
<dbReference type="Reactome" id="R-MMU-73943">
    <property type="pathway name" value="Reversal of alkylation damage by DNA dioxygenases"/>
</dbReference>
<dbReference type="BioGRID-ORCS" id="268420">
    <property type="hits" value="5 hits in 77 CRISPR screens"/>
</dbReference>
<dbReference type="ChiTaRS" id="Alkbh5">
    <property type="organism name" value="mouse"/>
</dbReference>
<dbReference type="PRO" id="PR:Q3TSG4"/>
<dbReference type="Proteomes" id="UP000000589">
    <property type="component" value="Chromosome 11"/>
</dbReference>
<dbReference type="RNAct" id="Q3TSG4">
    <property type="molecule type" value="protein"/>
</dbReference>
<dbReference type="Bgee" id="ENSMUSG00000042650">
    <property type="expression patterns" value="Expressed in pigmented layer of retina and 253 other cell types or tissues"/>
</dbReference>
<dbReference type="GO" id="GO:0005829">
    <property type="term" value="C:cytosol"/>
    <property type="evidence" value="ECO:0007669"/>
    <property type="project" value="Ensembl"/>
</dbReference>
<dbReference type="GO" id="GO:0005794">
    <property type="term" value="C:Golgi apparatus"/>
    <property type="evidence" value="ECO:0007669"/>
    <property type="project" value="Ensembl"/>
</dbReference>
<dbReference type="GO" id="GO:0016607">
    <property type="term" value="C:nuclear speck"/>
    <property type="evidence" value="ECO:0000315"/>
    <property type="project" value="UniProtKB"/>
</dbReference>
<dbReference type="GO" id="GO:0005634">
    <property type="term" value="C:nucleus"/>
    <property type="evidence" value="ECO:0000250"/>
    <property type="project" value="UniProtKB"/>
</dbReference>
<dbReference type="GO" id="GO:0042382">
    <property type="term" value="C:paraspeckles"/>
    <property type="evidence" value="ECO:0000250"/>
    <property type="project" value="UniProtKB"/>
</dbReference>
<dbReference type="GO" id="GO:0016706">
    <property type="term" value="F:2-oxoglutarate-dependent dioxygenase activity"/>
    <property type="evidence" value="ECO:0000250"/>
    <property type="project" value="UniProtKB"/>
</dbReference>
<dbReference type="GO" id="GO:0046872">
    <property type="term" value="F:metal ion binding"/>
    <property type="evidence" value="ECO:0007669"/>
    <property type="project" value="UniProtKB-KW"/>
</dbReference>
<dbReference type="GO" id="GO:0140693">
    <property type="term" value="F:molecular condensate scaffold activity"/>
    <property type="evidence" value="ECO:0000250"/>
    <property type="project" value="UniProtKB"/>
</dbReference>
<dbReference type="GO" id="GO:1990931">
    <property type="term" value="F:mRNA N6-methyladenosine dioxygenase activity"/>
    <property type="evidence" value="ECO:0000315"/>
    <property type="project" value="UniProtKB"/>
</dbReference>
<dbReference type="GO" id="GO:0030154">
    <property type="term" value="P:cell differentiation"/>
    <property type="evidence" value="ECO:0007669"/>
    <property type="project" value="UniProtKB-KW"/>
</dbReference>
<dbReference type="GO" id="GO:0046630">
    <property type="term" value="P:gamma-delta T cell proliferation"/>
    <property type="evidence" value="ECO:0000315"/>
    <property type="project" value="UniProtKB"/>
</dbReference>
<dbReference type="GO" id="GO:0140694">
    <property type="term" value="P:membraneless organelle assembly"/>
    <property type="evidence" value="ECO:0000250"/>
    <property type="project" value="UniProtKB"/>
</dbReference>
<dbReference type="GO" id="GO:0061157">
    <property type="term" value="P:mRNA destabilization"/>
    <property type="evidence" value="ECO:0000315"/>
    <property type="project" value="UniProtKB"/>
</dbReference>
<dbReference type="GO" id="GO:0006397">
    <property type="term" value="P:mRNA processing"/>
    <property type="evidence" value="ECO:0007669"/>
    <property type="project" value="InterPro"/>
</dbReference>
<dbReference type="GO" id="GO:0010793">
    <property type="term" value="P:regulation of mRNA export from nucleus"/>
    <property type="evidence" value="ECO:0000250"/>
    <property type="project" value="UniProtKB"/>
</dbReference>
<dbReference type="GO" id="GO:0050684">
    <property type="term" value="P:regulation of mRNA processing"/>
    <property type="evidence" value="ECO:0000250"/>
    <property type="project" value="UniProtKB"/>
</dbReference>
<dbReference type="GO" id="GO:0043488">
    <property type="term" value="P:regulation of mRNA stability"/>
    <property type="evidence" value="ECO:0000315"/>
    <property type="project" value="UniProtKB"/>
</dbReference>
<dbReference type="GO" id="GO:0006417">
    <property type="term" value="P:regulation of translation"/>
    <property type="evidence" value="ECO:0000250"/>
    <property type="project" value="UniProtKB"/>
</dbReference>
<dbReference type="GO" id="GO:0001666">
    <property type="term" value="P:response to hypoxia"/>
    <property type="evidence" value="ECO:0000250"/>
    <property type="project" value="UniProtKB"/>
</dbReference>
<dbReference type="GO" id="GO:0007283">
    <property type="term" value="P:spermatogenesis"/>
    <property type="evidence" value="ECO:0000315"/>
    <property type="project" value="UniProtKB"/>
</dbReference>
<dbReference type="FunFam" id="2.60.120.590:FF:000002">
    <property type="entry name" value="RNA demethylase ALKBH5"/>
    <property type="match status" value="1"/>
</dbReference>
<dbReference type="Gene3D" id="2.60.120.590">
    <property type="entry name" value="Alpha-ketoglutarate-dependent dioxygenase AlkB-like"/>
    <property type="match status" value="1"/>
</dbReference>
<dbReference type="InterPro" id="IPR027450">
    <property type="entry name" value="AlkB-like"/>
</dbReference>
<dbReference type="InterPro" id="IPR037151">
    <property type="entry name" value="AlkB-like_sf"/>
</dbReference>
<dbReference type="InterPro" id="IPR032860">
    <property type="entry name" value="ALKBH5"/>
</dbReference>
<dbReference type="PANTHER" id="PTHR32074">
    <property type="entry name" value="RNA DEMETHYLASE ALKBH5"/>
    <property type="match status" value="1"/>
</dbReference>
<dbReference type="PANTHER" id="PTHR32074:SF2">
    <property type="entry name" value="RNA DEMETHYLASE ALKBH5"/>
    <property type="match status" value="1"/>
</dbReference>
<dbReference type="Pfam" id="PF13532">
    <property type="entry name" value="2OG-FeII_Oxy_2"/>
    <property type="match status" value="1"/>
</dbReference>
<dbReference type="SUPFAM" id="SSF51197">
    <property type="entry name" value="Clavaminate synthase-like"/>
    <property type="match status" value="1"/>
</dbReference>